<gene>
    <name type="primary">Il1rl1</name>
    <name type="synonym">Fit1</name>
</gene>
<accession>Q62611</accession>
<accession>Q62612</accession>
<protein>
    <recommendedName>
        <fullName>Interleukin-1 receptor-like 1</fullName>
        <ecNumber evidence="6">3.2.2.6</ecNumber>
    </recommendedName>
    <alternativeName>
        <fullName>Fit-1</fullName>
    </alternativeName>
    <alternativeName>
        <fullName>Fos-responsive gene 1 protein</fullName>
    </alternativeName>
</protein>
<proteinExistence type="evidence at transcript level"/>
<dbReference type="EC" id="3.2.2.6" evidence="6"/>
<dbReference type="EMBL" id="U04317">
    <property type="protein sequence ID" value="AAA18480.1"/>
    <property type="molecule type" value="mRNA"/>
</dbReference>
<dbReference type="EMBL" id="U04319">
    <property type="protein sequence ID" value="AAA67172.1"/>
    <property type="molecule type" value="mRNA"/>
</dbReference>
<dbReference type="PIR" id="S42632">
    <property type="entry name" value="S42632"/>
</dbReference>
<dbReference type="PIR" id="S42633">
    <property type="entry name" value="S42633"/>
</dbReference>
<dbReference type="RefSeq" id="NP_001121161.1">
    <molecule id="Q62611-1"/>
    <property type="nucleotide sequence ID" value="NM_001127689.1"/>
</dbReference>
<dbReference type="RefSeq" id="NP_037169.1">
    <molecule id="Q62611-2"/>
    <property type="nucleotide sequence ID" value="NM_013037.1"/>
</dbReference>
<dbReference type="SMR" id="Q62611"/>
<dbReference type="FunCoup" id="Q62611">
    <property type="interactions" value="63"/>
</dbReference>
<dbReference type="STRING" id="10116.ENSRNOP00000020108"/>
<dbReference type="GlyCosmos" id="Q62611">
    <property type="glycosylation" value="6 sites, No reported glycans"/>
</dbReference>
<dbReference type="GlyGen" id="Q62611">
    <property type="glycosylation" value="6 sites"/>
</dbReference>
<dbReference type="PhosphoSitePlus" id="Q62611"/>
<dbReference type="PaxDb" id="10116-ENSRNOP00000020144"/>
<dbReference type="GeneID" id="25556"/>
<dbReference type="KEGG" id="rno:25556"/>
<dbReference type="UCSC" id="RGD:2894">
    <molecule id="Q62611-1"/>
    <property type="organism name" value="rat"/>
</dbReference>
<dbReference type="AGR" id="RGD:2894"/>
<dbReference type="CTD" id="9173"/>
<dbReference type="RGD" id="2894">
    <property type="gene designation" value="Il1rl1"/>
</dbReference>
<dbReference type="eggNOG" id="ENOG502RU6H">
    <property type="taxonomic scope" value="Eukaryota"/>
</dbReference>
<dbReference type="InParanoid" id="Q62611"/>
<dbReference type="OrthoDB" id="6132459at2759"/>
<dbReference type="PhylomeDB" id="Q62611"/>
<dbReference type="Reactome" id="R-RNO-1257604">
    <property type="pathway name" value="PIP3 activates AKT signaling"/>
</dbReference>
<dbReference type="Reactome" id="R-RNO-6811558">
    <property type="pathway name" value="PI5P, PP2A and IER3 Regulate PI3K/AKT Signaling"/>
</dbReference>
<dbReference type="Reactome" id="R-RNO-9014843">
    <property type="pathway name" value="Interleukin-33 signaling"/>
</dbReference>
<dbReference type="PRO" id="PR:Q62611"/>
<dbReference type="Proteomes" id="UP000002494">
    <property type="component" value="Unplaced"/>
</dbReference>
<dbReference type="GO" id="GO:0009986">
    <property type="term" value="C:cell surface"/>
    <property type="evidence" value="ECO:0000314"/>
    <property type="project" value="RGD"/>
</dbReference>
<dbReference type="GO" id="GO:0009897">
    <property type="term" value="C:external side of plasma membrane"/>
    <property type="evidence" value="ECO:0000314"/>
    <property type="project" value="MGI"/>
</dbReference>
<dbReference type="GO" id="GO:0005615">
    <property type="term" value="C:extracellular space"/>
    <property type="evidence" value="ECO:0000314"/>
    <property type="project" value="RGD"/>
</dbReference>
<dbReference type="GO" id="GO:0005886">
    <property type="term" value="C:plasma membrane"/>
    <property type="evidence" value="ECO:0000318"/>
    <property type="project" value="GO_Central"/>
</dbReference>
<dbReference type="GO" id="GO:0004908">
    <property type="term" value="F:interleukin-1 receptor activity"/>
    <property type="evidence" value="ECO:0007669"/>
    <property type="project" value="InterPro"/>
</dbReference>
<dbReference type="GO" id="GO:0002113">
    <property type="term" value="F:interleukin-33 binding"/>
    <property type="evidence" value="ECO:0000266"/>
    <property type="project" value="RGD"/>
</dbReference>
<dbReference type="GO" id="GO:0002114">
    <property type="term" value="F:interleukin-33 receptor activity"/>
    <property type="evidence" value="ECO:0000266"/>
    <property type="project" value="RGD"/>
</dbReference>
<dbReference type="GO" id="GO:0061809">
    <property type="term" value="F:NAD+ nucleosidase activity, cyclic ADP-ribose generating"/>
    <property type="evidence" value="ECO:0007669"/>
    <property type="project" value="UniProtKB-EC"/>
</dbReference>
<dbReference type="GO" id="GO:1990859">
    <property type="term" value="P:cellular response to endothelin"/>
    <property type="evidence" value="ECO:0000270"/>
    <property type="project" value="RGD"/>
</dbReference>
<dbReference type="GO" id="GO:0071260">
    <property type="term" value="P:cellular response to mechanical stimulus"/>
    <property type="evidence" value="ECO:0000270"/>
    <property type="project" value="RGD"/>
</dbReference>
<dbReference type="GO" id="GO:0006954">
    <property type="term" value="P:inflammatory response"/>
    <property type="evidence" value="ECO:0000250"/>
    <property type="project" value="UniProtKB"/>
</dbReference>
<dbReference type="GO" id="GO:0038172">
    <property type="term" value="P:interleukin-33-mediated signaling pathway"/>
    <property type="evidence" value="ECO:0000266"/>
    <property type="project" value="RGD"/>
</dbReference>
<dbReference type="GO" id="GO:0030225">
    <property type="term" value="P:macrophage differentiation"/>
    <property type="evidence" value="ECO:0000250"/>
    <property type="project" value="UniProtKB"/>
</dbReference>
<dbReference type="GO" id="GO:0008285">
    <property type="term" value="P:negative regulation of cell population proliferation"/>
    <property type="evidence" value="ECO:0000314"/>
    <property type="project" value="RGD"/>
</dbReference>
<dbReference type="GO" id="GO:0002826">
    <property type="term" value="P:negative regulation of T-helper 1 type immune response"/>
    <property type="evidence" value="ECO:0000266"/>
    <property type="project" value="RGD"/>
</dbReference>
<dbReference type="GO" id="GO:0032689">
    <property type="term" value="P:negative regulation of type II interferon production"/>
    <property type="evidence" value="ECO:0000266"/>
    <property type="project" value="RGD"/>
</dbReference>
<dbReference type="GO" id="GO:0032722">
    <property type="term" value="P:positive regulation of chemokine production"/>
    <property type="evidence" value="ECO:0000266"/>
    <property type="project" value="RGD"/>
</dbReference>
<dbReference type="GO" id="GO:0050729">
    <property type="term" value="P:positive regulation of inflammatory response"/>
    <property type="evidence" value="ECO:0000266"/>
    <property type="project" value="RGD"/>
</dbReference>
<dbReference type="GO" id="GO:0032754">
    <property type="term" value="P:positive regulation of interleukin-5 production"/>
    <property type="evidence" value="ECO:0000266"/>
    <property type="project" value="RGD"/>
</dbReference>
<dbReference type="GO" id="GO:0043032">
    <property type="term" value="P:positive regulation of macrophage activation"/>
    <property type="evidence" value="ECO:0000266"/>
    <property type="project" value="RGD"/>
</dbReference>
<dbReference type="GO" id="GO:0031667">
    <property type="term" value="P:response to nutrient levels"/>
    <property type="evidence" value="ECO:0000270"/>
    <property type="project" value="RGD"/>
</dbReference>
<dbReference type="GO" id="GO:0009611">
    <property type="term" value="P:response to wounding"/>
    <property type="evidence" value="ECO:0000266"/>
    <property type="project" value="RGD"/>
</dbReference>
<dbReference type="CDD" id="cd05757">
    <property type="entry name" value="Ig2_IL1R-like"/>
    <property type="match status" value="1"/>
</dbReference>
<dbReference type="FunFam" id="3.40.50.10140:FF:000002">
    <property type="entry name" value="Interleukin 1 receptor accessory protein"/>
    <property type="match status" value="1"/>
</dbReference>
<dbReference type="FunFam" id="2.60.40.10:FF:000188">
    <property type="entry name" value="Interleukin-1 receptor accessory protein-like 1"/>
    <property type="match status" value="1"/>
</dbReference>
<dbReference type="FunFam" id="2.60.40.10:FF:000284">
    <property type="entry name" value="interleukin-1 receptor accessory protein-like 1"/>
    <property type="match status" value="1"/>
</dbReference>
<dbReference type="FunFam" id="2.60.40.10:FF:001471">
    <property type="entry name" value="interleukin-1 receptor-like 1 isoform X3"/>
    <property type="match status" value="1"/>
</dbReference>
<dbReference type="Gene3D" id="2.60.40.10">
    <property type="entry name" value="Immunoglobulins"/>
    <property type="match status" value="3"/>
</dbReference>
<dbReference type="Gene3D" id="3.40.50.10140">
    <property type="entry name" value="Toll/interleukin-1 receptor homology (TIR) domain"/>
    <property type="match status" value="1"/>
</dbReference>
<dbReference type="InterPro" id="IPR007110">
    <property type="entry name" value="Ig-like_dom"/>
</dbReference>
<dbReference type="InterPro" id="IPR036179">
    <property type="entry name" value="Ig-like_dom_sf"/>
</dbReference>
<dbReference type="InterPro" id="IPR013783">
    <property type="entry name" value="Ig-like_fold"/>
</dbReference>
<dbReference type="InterPro" id="IPR003599">
    <property type="entry name" value="Ig_sub"/>
</dbReference>
<dbReference type="InterPro" id="IPR003598">
    <property type="entry name" value="Ig_sub2"/>
</dbReference>
<dbReference type="InterPro" id="IPR015621">
    <property type="entry name" value="IL-1_rcpt_fam"/>
</dbReference>
<dbReference type="InterPro" id="IPR004074">
    <property type="entry name" value="IL-1_rcpt_I/II-typ"/>
</dbReference>
<dbReference type="InterPro" id="IPR000157">
    <property type="entry name" value="TIR_dom"/>
</dbReference>
<dbReference type="InterPro" id="IPR035897">
    <property type="entry name" value="Toll_tir_struct_dom_sf"/>
</dbReference>
<dbReference type="PANTHER" id="PTHR11890">
    <property type="entry name" value="INTERLEUKIN-1 RECEPTOR FAMILY MEMBER"/>
    <property type="match status" value="1"/>
</dbReference>
<dbReference type="PANTHER" id="PTHR11890:SF7">
    <property type="entry name" value="INTERLEUKIN-1 RECEPTOR-LIKE 1"/>
    <property type="match status" value="1"/>
</dbReference>
<dbReference type="Pfam" id="PF01582">
    <property type="entry name" value="TIR"/>
    <property type="match status" value="1"/>
</dbReference>
<dbReference type="PRINTS" id="PR01536">
    <property type="entry name" value="INTRLKN1R12F"/>
</dbReference>
<dbReference type="PRINTS" id="PR01537">
    <property type="entry name" value="INTRLKN1R1F"/>
</dbReference>
<dbReference type="SMART" id="SM00409">
    <property type="entry name" value="IG"/>
    <property type="match status" value="3"/>
</dbReference>
<dbReference type="SMART" id="SM00408">
    <property type="entry name" value="IGc2"/>
    <property type="match status" value="2"/>
</dbReference>
<dbReference type="SMART" id="SM00255">
    <property type="entry name" value="TIR"/>
    <property type="match status" value="1"/>
</dbReference>
<dbReference type="SUPFAM" id="SSF48726">
    <property type="entry name" value="Immunoglobulin"/>
    <property type="match status" value="3"/>
</dbReference>
<dbReference type="SUPFAM" id="SSF52200">
    <property type="entry name" value="Toll/Interleukin receptor TIR domain"/>
    <property type="match status" value="1"/>
</dbReference>
<dbReference type="PROSITE" id="PS50835">
    <property type="entry name" value="IG_LIKE"/>
    <property type="match status" value="3"/>
</dbReference>
<dbReference type="PROSITE" id="PS50104">
    <property type="entry name" value="TIR"/>
    <property type="match status" value="1"/>
</dbReference>
<keyword id="KW-0877">Alternative promoter usage</keyword>
<keyword id="KW-0025">Alternative splicing</keyword>
<keyword id="KW-1003">Cell membrane</keyword>
<keyword id="KW-1015">Disulfide bond</keyword>
<keyword id="KW-0325">Glycoprotein</keyword>
<keyword id="KW-0378">Hydrolase</keyword>
<keyword id="KW-0393">Immunoglobulin domain</keyword>
<keyword id="KW-1017">Isopeptide bond</keyword>
<keyword id="KW-0472">Membrane</keyword>
<keyword id="KW-0520">NAD</keyword>
<keyword id="KW-0597">Phosphoprotein</keyword>
<keyword id="KW-0675">Receptor</keyword>
<keyword id="KW-1185">Reference proteome</keyword>
<keyword id="KW-0677">Repeat</keyword>
<keyword id="KW-0964">Secreted</keyword>
<keyword id="KW-0732">Signal</keyword>
<keyword id="KW-0812">Transmembrane</keyword>
<keyword id="KW-1133">Transmembrane helix</keyword>
<keyword id="KW-0832">Ubl conjugation</keyword>
<sequence length="566" mass="64406">MIGKWRMGLWALAILTVPMYFIVTEGRKTSWGLENEALIVRCPQRGGAINPVEWYYSNTNERIPTQKRNRIFVSRDRLKFLPAKVEDSGIYTCVIRSPESIKTGSLNVTIYKRPPNCKIPDYMMYSTVDGSDKNSKITCPTIALYNWTAPVQWFKNCKALQGPRFRAHMSYLFIDKVSHVDEGDYTCRFTHTENGTNYIVTATRSFTVEEKGFSTFPVITNPPHNYTVEVEIGKTANIACSACFGTASQFVAVLWQINKTRIGSFGKARIQEEKGPNKSSSNGMICLTSLLRITGVTDKDFSLKYDCVAMNHHGVIRHPVRLRRKQPIDHQSTYYIVAGCSLLLMFINVLVIVLKVFWIEVALFWRDIMAPYKTQNDGKLYDAYIIYPRVFRGSAAGTGSVEYFVHYTLPDVLENKCGYKLCIYGRDLLPGQDAATVVESSIQNSRRQVFVLAPHMMHSKEFAYEQEIALHSALIQNNSKVILIEMEPMGEASRLQLGDLQDSLQHLVKMQGTIKWREDHVADKQSLSSKFWKHVRYQMPVPKRPPKMASVAAPLSGKVCLDLKHF</sequence>
<reference key="1">
    <citation type="journal article" date="1994" name="EMBO J.">
        <title>Alternative promoter usage of the Fos-responsive gene Fit-1 generates mRNA isoforms coding for either secreted or membrane-bound proteins related to the IL-1 receptor.</title>
        <authorList>
            <person name="Bergers G."/>
            <person name="Reikersdorfer A."/>
            <person name="Braselmann S."/>
            <person name="Graninger P."/>
            <person name="Busslinger M."/>
        </authorList>
    </citation>
    <scope>NUCLEOTIDE SEQUENCE [MRNA] (ISOFORMS A AND B)</scope>
</reference>
<name>ILRL1_RAT</name>
<organism>
    <name type="scientific">Rattus norvegicus</name>
    <name type="common">Rat</name>
    <dbReference type="NCBI Taxonomy" id="10116"/>
    <lineage>
        <taxon>Eukaryota</taxon>
        <taxon>Metazoa</taxon>
        <taxon>Chordata</taxon>
        <taxon>Craniata</taxon>
        <taxon>Vertebrata</taxon>
        <taxon>Euteleostomi</taxon>
        <taxon>Mammalia</taxon>
        <taxon>Eutheria</taxon>
        <taxon>Euarchontoglires</taxon>
        <taxon>Glires</taxon>
        <taxon>Rodentia</taxon>
        <taxon>Myomorpha</taxon>
        <taxon>Muroidea</taxon>
        <taxon>Muridae</taxon>
        <taxon>Murinae</taxon>
        <taxon>Rattus</taxon>
    </lineage>
</organism>
<feature type="signal peptide" evidence="4">
    <location>
        <begin position="1"/>
        <end position="26"/>
    </location>
</feature>
<feature type="chain" id="PRO_0000015444" description="Interleukin-1 receptor-like 1">
    <location>
        <begin position="27"/>
        <end position="566"/>
    </location>
</feature>
<feature type="topological domain" description="Extracellular" evidence="4">
    <location>
        <begin position="27"/>
        <end position="331"/>
    </location>
</feature>
<feature type="transmembrane region" description="Helical" evidence="4">
    <location>
        <begin position="332"/>
        <end position="354"/>
    </location>
</feature>
<feature type="topological domain" description="Cytoplasmic" evidence="4">
    <location>
        <begin position="355"/>
        <end position="566"/>
    </location>
</feature>
<feature type="domain" description="Ig-like C2-type 1">
    <location>
        <begin position="27"/>
        <end position="109"/>
    </location>
</feature>
<feature type="domain" description="Ig-like C2-type 2">
    <location>
        <begin position="120"/>
        <end position="207"/>
    </location>
</feature>
<feature type="domain" description="Ig-like C2-type 3">
    <location>
        <begin position="217"/>
        <end position="323"/>
    </location>
</feature>
<feature type="domain" description="TIR" evidence="6">
    <location>
        <begin position="379"/>
        <end position="539"/>
    </location>
</feature>
<feature type="region of interest" description="Flexible linker" evidence="1">
    <location>
        <begin position="204"/>
        <end position="216"/>
    </location>
</feature>
<feature type="active site" evidence="6">
    <location>
        <position position="465"/>
    </location>
</feature>
<feature type="modified residue" description="Phosphoserine" evidence="2">
    <location>
        <position position="441"/>
    </location>
</feature>
<feature type="glycosylation site" description="N-linked (GlcNAc...) asparagine" evidence="4">
    <location>
        <position position="107"/>
    </location>
</feature>
<feature type="glycosylation site" description="N-linked (GlcNAc...) asparagine" evidence="4">
    <location>
        <position position="146"/>
    </location>
</feature>
<feature type="glycosylation site" description="N-linked (GlcNAc...) asparagine" evidence="4">
    <location>
        <position position="194"/>
    </location>
</feature>
<feature type="glycosylation site" description="N-linked (GlcNAc...) asparagine" evidence="4">
    <location>
        <position position="225"/>
    </location>
</feature>
<feature type="glycosylation site" description="N-linked (GlcNAc...) asparagine" evidence="4">
    <location>
        <position position="258"/>
    </location>
</feature>
<feature type="glycosylation site" description="N-linked (GlcNAc...) asparagine" evidence="4">
    <location>
        <position position="277"/>
    </location>
</feature>
<feature type="disulfide bond" evidence="5">
    <location>
        <begin position="42"/>
        <end position="93"/>
    </location>
</feature>
<feature type="disulfide bond" evidence="5">
    <location>
        <begin position="117"/>
        <end position="157"/>
    </location>
</feature>
<feature type="disulfide bond" evidence="5">
    <location>
        <begin position="139"/>
        <end position="187"/>
    </location>
</feature>
<feature type="disulfide bond" evidence="5">
    <location>
        <begin position="240"/>
        <end position="307"/>
    </location>
</feature>
<feature type="disulfide bond" evidence="5">
    <location>
        <begin position="243"/>
        <end position="286"/>
    </location>
</feature>
<feature type="cross-link" description="Glycyl lysine isopeptide (Lys-Gly) (interchain with G-Cter in ubiquitin)" evidence="2">
    <location>
        <position position="325"/>
    </location>
</feature>
<feature type="splice variant" id="VSP_002670" description="In isoform B." evidence="7">
    <original>IDHQSTYYI</original>
    <variation>SKECLSQIA</variation>
    <location>
        <begin position="328"/>
        <end position="336"/>
    </location>
</feature>
<feature type="splice variant" id="VSP_002671" description="In isoform B." evidence="7">
    <location>
        <begin position="337"/>
        <end position="566"/>
    </location>
</feature>
<comment type="function">
    <text evidence="2 3">Receptor for interleukin-33 (IL-33) which plays crucial roles in innate and adaptive immunity, contributing to tissue homeostasis and responses to environmental stresses together with coreceptor IL1RAP. Its stimulation recruits MYD88, IRAK1, IRAK4, and TRAF6, followed by phosphorylation of MAPK3/ERK1 and/or MAPK1/ERK2, MAPK14, and MAPK8. Possibly involved in helper T-cell function (By similarity). Upon tissue injury, induces UCP2-dependent mitochondrial rewiring that attenuates the generation of reactive oxygen species and preserves the integrity of Krebs cycle required for persistent production of itaconate and subsequent GATA3-dependent differentiation of inflammation-resolving alternatively activated macrophages.</text>
</comment>
<comment type="function">
    <molecule>Isoform B</molecule>
    <text evidence="2">Inhibits IL-33 signaling.</text>
</comment>
<comment type="catalytic activity">
    <reaction evidence="6">
        <text>NAD(+) + H2O = ADP-D-ribose + nicotinamide + H(+)</text>
        <dbReference type="Rhea" id="RHEA:16301"/>
        <dbReference type="ChEBI" id="CHEBI:15377"/>
        <dbReference type="ChEBI" id="CHEBI:15378"/>
        <dbReference type="ChEBI" id="CHEBI:17154"/>
        <dbReference type="ChEBI" id="CHEBI:57540"/>
        <dbReference type="ChEBI" id="CHEBI:57967"/>
        <dbReference type="EC" id="3.2.2.6"/>
    </reaction>
    <physiologicalReaction direction="left-to-right" evidence="6">
        <dbReference type="Rhea" id="RHEA:16302"/>
    </physiologicalReaction>
</comment>
<comment type="subunit">
    <text evidence="2 3">Interacts with MYD88, IRAK1, IRAK4, and TRAF6 (By similarity). Bound to its ligand IL-33, interacts with IL1RAP to form the minimal interleukin-33 signaling complex with a 1:1:1 stoichiometry. Interacts with KIT (bound to KITLG/SCF). A mast cell-specific KITLG/SCF-induced interleukin-33 signaling complex contains IL1RL1, IL1RAP, KIT and MYD88 (By similarity). Interacts with TMED1 (By similarity).</text>
</comment>
<comment type="subcellular location">
    <subcellularLocation>
        <location>Cell membrane</location>
        <topology>Single-pass type I membrane protein</topology>
    </subcellularLocation>
</comment>
<comment type="subcellular location">
    <molecule>Isoform B</molecule>
    <subcellularLocation>
        <location>Secreted</location>
    </subcellularLocation>
</comment>
<comment type="alternative products">
    <event type="alternative promoter"/>
    <event type="alternative splicing"/>
    <isoform>
        <id>Q62611-1</id>
        <name>A</name>
        <name>Membrane-bound</name>
        <name>Fit-1M</name>
        <sequence type="displayed"/>
    </isoform>
    <isoform>
        <id>Q62611-2</id>
        <name>B</name>
        <name>Soluble</name>
        <name>Fit-1S</name>
        <sequence type="described" ref="VSP_002670 VSP_002671"/>
    </isoform>
</comment>
<comment type="tissue specificity">
    <text>Isoform A is detected in spleen, lung, bone marrow and lymh node. Isoform B is predominant in fibroblasts.</text>
</comment>
<comment type="induction">
    <text>By FOS.</text>
</comment>
<comment type="domain">
    <text evidence="6">The TIR domain mediates NAD(+) hydrolase (NADase) activity. Self-association of TIR domains is required for NADase activity.</text>
</comment>
<comment type="PTM">
    <text evidence="2">Phosphorylated by GSK3B at Ser-441; leading to proteasomal degradation.</text>
</comment>
<comment type="PTM">
    <text evidence="2 3">Ubiquitinated at Lys-325 in a FBXL19-mediated manner; leading to proteasomal degradation. Ubiquitination by TRAF6 via 'Lys-27'-linked polyubiquitination and deubiquitination by USP38 serves as a critical regulatory mechanism for fine-tuning IL1RL1-mediated inflammatory response.</text>
</comment>
<comment type="similarity">
    <text evidence="8">Belongs to the interleukin-1 receptor family.</text>
</comment>
<evidence type="ECO:0000250" key="1"/>
<evidence type="ECO:0000250" key="2">
    <source>
        <dbReference type="UniProtKB" id="P14719"/>
    </source>
</evidence>
<evidence type="ECO:0000250" key="3">
    <source>
        <dbReference type="UniProtKB" id="Q01638"/>
    </source>
</evidence>
<evidence type="ECO:0000255" key="4"/>
<evidence type="ECO:0000255" key="5">
    <source>
        <dbReference type="PROSITE-ProRule" id="PRU00114"/>
    </source>
</evidence>
<evidence type="ECO:0000255" key="6">
    <source>
        <dbReference type="PROSITE-ProRule" id="PRU00204"/>
    </source>
</evidence>
<evidence type="ECO:0000303" key="7">
    <source>
    </source>
</evidence>
<evidence type="ECO:0000305" key="8"/>